<keyword id="KW-0067">ATP-binding</keyword>
<keyword id="KW-0460">Magnesium</keyword>
<keyword id="KW-0464">Manganese</keyword>
<keyword id="KW-0479">Metal-binding</keyword>
<keyword id="KW-0547">Nucleotide-binding</keyword>
<keyword id="KW-0548">Nucleotidyltransferase</keyword>
<keyword id="KW-1185">Reference proteome</keyword>
<keyword id="KW-0808">Transferase</keyword>
<proteinExistence type="inferred from homology"/>
<name>SELO_TERTT</name>
<dbReference type="EC" id="2.7.7.-" evidence="1"/>
<dbReference type="EC" id="2.7.7.108" evidence="1"/>
<dbReference type="EMBL" id="CP001614">
    <property type="protein sequence ID" value="ACR14770.1"/>
    <property type="molecule type" value="Genomic_DNA"/>
</dbReference>
<dbReference type="RefSeq" id="WP_015820884.1">
    <property type="nucleotide sequence ID" value="NC_012997.1"/>
</dbReference>
<dbReference type="SMR" id="C5BUK5"/>
<dbReference type="STRING" id="377629.TERTU_4165"/>
<dbReference type="GeneID" id="58407449"/>
<dbReference type="KEGG" id="ttu:TERTU_4165"/>
<dbReference type="eggNOG" id="COG0397">
    <property type="taxonomic scope" value="Bacteria"/>
</dbReference>
<dbReference type="HOGENOM" id="CLU_010245_4_1_6"/>
<dbReference type="OrthoDB" id="9776281at2"/>
<dbReference type="Proteomes" id="UP000009080">
    <property type="component" value="Chromosome"/>
</dbReference>
<dbReference type="GO" id="GO:0070733">
    <property type="term" value="F:AMPylase activity"/>
    <property type="evidence" value="ECO:0007669"/>
    <property type="project" value="TreeGrafter"/>
</dbReference>
<dbReference type="GO" id="GO:0005524">
    <property type="term" value="F:ATP binding"/>
    <property type="evidence" value="ECO:0007669"/>
    <property type="project" value="UniProtKB-UniRule"/>
</dbReference>
<dbReference type="GO" id="GO:0000287">
    <property type="term" value="F:magnesium ion binding"/>
    <property type="evidence" value="ECO:0007669"/>
    <property type="project" value="UniProtKB-UniRule"/>
</dbReference>
<dbReference type="HAMAP" id="MF_00692">
    <property type="entry name" value="YdiU_SelO"/>
    <property type="match status" value="1"/>
</dbReference>
<dbReference type="InterPro" id="IPR003846">
    <property type="entry name" value="SelO"/>
</dbReference>
<dbReference type="NCBIfam" id="NF000658">
    <property type="entry name" value="PRK00029.1"/>
    <property type="match status" value="1"/>
</dbReference>
<dbReference type="PANTHER" id="PTHR32057">
    <property type="entry name" value="PROTEIN ADENYLYLTRANSFERASE SELO, MITOCHONDRIAL"/>
    <property type="match status" value="1"/>
</dbReference>
<dbReference type="PANTHER" id="PTHR32057:SF14">
    <property type="entry name" value="PROTEIN ADENYLYLTRANSFERASE SELO, MITOCHONDRIAL"/>
    <property type="match status" value="1"/>
</dbReference>
<dbReference type="Pfam" id="PF02696">
    <property type="entry name" value="SelO"/>
    <property type="match status" value="1"/>
</dbReference>
<protein>
    <recommendedName>
        <fullName evidence="1">Protein nucleotidyltransferase YdiU</fullName>
        <ecNumber evidence="1">2.7.7.-</ecNumber>
    </recommendedName>
    <alternativeName>
        <fullName evidence="1">Protein adenylyltransferase YdiU</fullName>
        <ecNumber evidence="1">2.7.7.108</ecNumber>
    </alternativeName>
    <alternativeName>
        <fullName evidence="1">Protein uridylyltransferase YdiU</fullName>
        <ecNumber evidence="1">2.7.7.-</ecNumber>
    </alternativeName>
</protein>
<feature type="chain" id="PRO_1000212597" description="Protein nucleotidyltransferase YdiU">
    <location>
        <begin position="1"/>
        <end position="485"/>
    </location>
</feature>
<feature type="region of interest" description="Disordered" evidence="2">
    <location>
        <begin position="462"/>
        <end position="485"/>
    </location>
</feature>
<feature type="active site" description="Proton acceptor" evidence="1">
    <location>
        <position position="249"/>
    </location>
</feature>
<feature type="binding site" evidence="1">
    <location>
        <position position="85"/>
    </location>
    <ligand>
        <name>ATP</name>
        <dbReference type="ChEBI" id="CHEBI:30616"/>
    </ligand>
</feature>
<feature type="binding site" evidence="1">
    <location>
        <position position="87"/>
    </location>
    <ligand>
        <name>ATP</name>
        <dbReference type="ChEBI" id="CHEBI:30616"/>
    </ligand>
</feature>
<feature type="binding site" evidence="1">
    <location>
        <position position="88"/>
    </location>
    <ligand>
        <name>ATP</name>
        <dbReference type="ChEBI" id="CHEBI:30616"/>
    </ligand>
</feature>
<feature type="binding site" evidence="1">
    <location>
        <position position="108"/>
    </location>
    <ligand>
        <name>ATP</name>
        <dbReference type="ChEBI" id="CHEBI:30616"/>
    </ligand>
</feature>
<feature type="binding site" evidence="1">
    <location>
        <position position="120"/>
    </location>
    <ligand>
        <name>ATP</name>
        <dbReference type="ChEBI" id="CHEBI:30616"/>
    </ligand>
</feature>
<feature type="binding site" evidence="1">
    <location>
        <position position="121"/>
    </location>
    <ligand>
        <name>ATP</name>
        <dbReference type="ChEBI" id="CHEBI:30616"/>
    </ligand>
</feature>
<feature type="binding site" evidence="1">
    <location>
        <position position="171"/>
    </location>
    <ligand>
        <name>ATP</name>
        <dbReference type="ChEBI" id="CHEBI:30616"/>
    </ligand>
</feature>
<feature type="binding site" evidence="1">
    <location>
        <position position="178"/>
    </location>
    <ligand>
        <name>ATP</name>
        <dbReference type="ChEBI" id="CHEBI:30616"/>
    </ligand>
</feature>
<feature type="binding site" evidence="1">
    <location>
        <position position="250"/>
    </location>
    <ligand>
        <name>Mg(2+)</name>
        <dbReference type="ChEBI" id="CHEBI:18420"/>
    </ligand>
</feature>
<feature type="binding site" evidence="1">
    <location>
        <position position="259"/>
    </location>
    <ligand>
        <name>ATP</name>
        <dbReference type="ChEBI" id="CHEBI:30616"/>
    </ligand>
</feature>
<feature type="binding site" evidence="1">
    <location>
        <position position="259"/>
    </location>
    <ligand>
        <name>Mg(2+)</name>
        <dbReference type="ChEBI" id="CHEBI:18420"/>
    </ligand>
</feature>
<accession>C5BUK5</accession>
<evidence type="ECO:0000255" key="1">
    <source>
        <dbReference type="HAMAP-Rule" id="MF_00692"/>
    </source>
</evidence>
<evidence type="ECO:0000256" key="2">
    <source>
        <dbReference type="SAM" id="MobiDB-lite"/>
    </source>
</evidence>
<comment type="function">
    <text evidence="1">Nucleotidyltransferase involved in the post-translational modification of proteins. It can catalyze the addition of adenosine monophosphate (AMP) or uridine monophosphate (UMP) to a protein, resulting in modifications known as AMPylation and UMPylation.</text>
</comment>
<comment type="catalytic activity">
    <reaction evidence="1">
        <text>L-seryl-[protein] + ATP = 3-O-(5'-adenylyl)-L-seryl-[protein] + diphosphate</text>
        <dbReference type="Rhea" id="RHEA:58120"/>
        <dbReference type="Rhea" id="RHEA-COMP:9863"/>
        <dbReference type="Rhea" id="RHEA-COMP:15073"/>
        <dbReference type="ChEBI" id="CHEBI:29999"/>
        <dbReference type="ChEBI" id="CHEBI:30616"/>
        <dbReference type="ChEBI" id="CHEBI:33019"/>
        <dbReference type="ChEBI" id="CHEBI:142516"/>
        <dbReference type="EC" id="2.7.7.108"/>
    </reaction>
</comment>
<comment type="catalytic activity">
    <reaction evidence="1">
        <text>L-threonyl-[protein] + ATP = 3-O-(5'-adenylyl)-L-threonyl-[protein] + diphosphate</text>
        <dbReference type="Rhea" id="RHEA:54292"/>
        <dbReference type="Rhea" id="RHEA-COMP:11060"/>
        <dbReference type="Rhea" id="RHEA-COMP:13847"/>
        <dbReference type="ChEBI" id="CHEBI:30013"/>
        <dbReference type="ChEBI" id="CHEBI:30616"/>
        <dbReference type="ChEBI" id="CHEBI:33019"/>
        <dbReference type="ChEBI" id="CHEBI:138113"/>
        <dbReference type="EC" id="2.7.7.108"/>
    </reaction>
</comment>
<comment type="catalytic activity">
    <reaction evidence="1">
        <text>L-tyrosyl-[protein] + ATP = O-(5'-adenylyl)-L-tyrosyl-[protein] + diphosphate</text>
        <dbReference type="Rhea" id="RHEA:54288"/>
        <dbReference type="Rhea" id="RHEA-COMP:10136"/>
        <dbReference type="Rhea" id="RHEA-COMP:13846"/>
        <dbReference type="ChEBI" id="CHEBI:30616"/>
        <dbReference type="ChEBI" id="CHEBI:33019"/>
        <dbReference type="ChEBI" id="CHEBI:46858"/>
        <dbReference type="ChEBI" id="CHEBI:83624"/>
        <dbReference type="EC" id="2.7.7.108"/>
    </reaction>
</comment>
<comment type="catalytic activity">
    <reaction evidence="1">
        <text>L-histidyl-[protein] + UTP = N(tele)-(5'-uridylyl)-L-histidyl-[protein] + diphosphate</text>
        <dbReference type="Rhea" id="RHEA:83891"/>
        <dbReference type="Rhea" id="RHEA-COMP:9745"/>
        <dbReference type="Rhea" id="RHEA-COMP:20239"/>
        <dbReference type="ChEBI" id="CHEBI:29979"/>
        <dbReference type="ChEBI" id="CHEBI:33019"/>
        <dbReference type="ChEBI" id="CHEBI:46398"/>
        <dbReference type="ChEBI" id="CHEBI:233474"/>
    </reaction>
</comment>
<comment type="catalytic activity">
    <reaction evidence="1">
        <text>L-seryl-[protein] + UTP = O-(5'-uridylyl)-L-seryl-[protein] + diphosphate</text>
        <dbReference type="Rhea" id="RHEA:64604"/>
        <dbReference type="Rhea" id="RHEA-COMP:9863"/>
        <dbReference type="Rhea" id="RHEA-COMP:16635"/>
        <dbReference type="ChEBI" id="CHEBI:29999"/>
        <dbReference type="ChEBI" id="CHEBI:33019"/>
        <dbReference type="ChEBI" id="CHEBI:46398"/>
        <dbReference type="ChEBI" id="CHEBI:156051"/>
    </reaction>
</comment>
<comment type="catalytic activity">
    <reaction evidence="1">
        <text>L-tyrosyl-[protein] + UTP = O-(5'-uridylyl)-L-tyrosyl-[protein] + diphosphate</text>
        <dbReference type="Rhea" id="RHEA:83887"/>
        <dbReference type="Rhea" id="RHEA-COMP:10136"/>
        <dbReference type="Rhea" id="RHEA-COMP:20238"/>
        <dbReference type="ChEBI" id="CHEBI:33019"/>
        <dbReference type="ChEBI" id="CHEBI:46398"/>
        <dbReference type="ChEBI" id="CHEBI:46858"/>
        <dbReference type="ChEBI" id="CHEBI:90602"/>
    </reaction>
</comment>
<comment type="cofactor">
    <cofactor evidence="1">
        <name>Mg(2+)</name>
        <dbReference type="ChEBI" id="CHEBI:18420"/>
    </cofactor>
    <cofactor evidence="1">
        <name>Mn(2+)</name>
        <dbReference type="ChEBI" id="CHEBI:29035"/>
    </cofactor>
</comment>
<comment type="similarity">
    <text evidence="1">Belongs to the SELO family.</text>
</comment>
<reference key="1">
    <citation type="journal article" date="2009" name="PLoS ONE">
        <title>The complete genome of Teredinibacter turnerae T7901: an intracellular endosymbiont of marine wood-boring bivalves (shipworms).</title>
        <authorList>
            <person name="Yang J.C."/>
            <person name="Madupu R."/>
            <person name="Durkin A.S."/>
            <person name="Ekborg N.A."/>
            <person name="Pedamallu C.S."/>
            <person name="Hostetler J.B."/>
            <person name="Radune D."/>
            <person name="Toms B.S."/>
            <person name="Henrissat B."/>
            <person name="Coutinho P.M."/>
            <person name="Schwarz S."/>
            <person name="Field L."/>
            <person name="Trindade-Silva A.E."/>
            <person name="Soares C.A.G."/>
            <person name="Elshahawi S."/>
            <person name="Hanora A."/>
            <person name="Schmidt E.W."/>
            <person name="Haygood M.G."/>
            <person name="Posfai J."/>
            <person name="Benner J."/>
            <person name="Madinger C."/>
            <person name="Nove J."/>
            <person name="Anton B."/>
            <person name="Chaudhary K."/>
            <person name="Foster J."/>
            <person name="Holman A."/>
            <person name="Kumar S."/>
            <person name="Lessard P.A."/>
            <person name="Luyten Y.A."/>
            <person name="Slatko B."/>
            <person name="Wood N."/>
            <person name="Wu B."/>
            <person name="Teplitski M."/>
            <person name="Mougous J.D."/>
            <person name="Ward N."/>
            <person name="Eisen J.A."/>
            <person name="Badger J.H."/>
            <person name="Distel D.L."/>
        </authorList>
    </citation>
    <scope>NUCLEOTIDE SEQUENCE [LARGE SCALE GENOMIC DNA]</scope>
    <source>
        <strain>ATCC 39867 / T7901</strain>
    </source>
</reference>
<organism>
    <name type="scientific">Teredinibacter turnerae (strain ATCC 39867 / T7901)</name>
    <dbReference type="NCBI Taxonomy" id="377629"/>
    <lineage>
        <taxon>Bacteria</taxon>
        <taxon>Pseudomonadati</taxon>
        <taxon>Pseudomonadota</taxon>
        <taxon>Gammaproteobacteria</taxon>
        <taxon>Cellvibrionales</taxon>
        <taxon>Cellvibrionaceae</taxon>
        <taxon>Teredinibacter</taxon>
    </lineage>
</organism>
<sequence>MQISNSYLQLGDDFYLPSTPRQPSNPQLFLWNQGLAESLGVADFLAQEQEDPAGFFSGGRLLPNSKPVALAYAGHQFGHFNPRLGDGRAHLLGELRGDTDMVFDVQLKGSGATPFSRGGDGLCGLGPAVREFIMSEAMAALGVPTSRTLAVVTTGDEVYRGDAVPGAVVCRVAASHLRVGTFEYFYAQGNKDAIERLCDYAISRHFPELASSEGPEKYSGFLRAVFSRQVELVCEWLRVGFVHGVMNTDNTTISGETIDYGPCAMISTYNPNTVFSSIDAMGRYRFGHQPSIAHWNMARLTECFLPLLDQDSKQATAIGESLLGEFPQNFEQRYHHMLASKTGVRLQGDSDKALCEDFLQLLRKQGLDYTNSFDSLTRSLIDPQHEDRCASQWPEWYQAWSARIEQQGRPREVVAEGMRRHNPVVIPRNHHMEAVIDECIKNGSPDAAKSWLKVLRRPYQDLPTTPNYQDPPADGDRSYQTFCGT</sequence>
<gene>
    <name evidence="1" type="primary">ydiU</name>
    <name evidence="1" type="synonym">selO</name>
    <name type="ordered locus">TERTU_4165</name>
</gene>